<comment type="function">
    <text evidence="1">May be a substrate-recognition component of a SCF-like ECS (Elongin-Cullin-SOCS-box protein) E3 ubiquitin-protein ligase complex which mediates the ubiquitination and subsequent proteasomal degradation of target proteins.</text>
</comment>
<comment type="pathway">
    <text>Protein modification; protein ubiquitination.</text>
</comment>
<comment type="domain">
    <text evidence="1">The SOCS box domain mediates the interaction with the Elongin BC complex, an adapter module in different E3 ubiquitin-protein ligase complexes.</text>
</comment>
<comment type="similarity">
    <text evidence="3">Belongs to the ankyrin SOCS box (ASB) family.</text>
</comment>
<gene>
    <name type="primary">Asb13</name>
</gene>
<reference key="1">
    <citation type="submission" date="2001-07" db="EMBL/GenBank/DDBJ databases">
        <title>SOCS box proteins.</title>
        <authorList>
            <person name="Kile B.T."/>
            <person name="Nicola N.A."/>
        </authorList>
    </citation>
    <scope>NUCLEOTIDE SEQUENCE [MRNA]</scope>
</reference>
<reference key="2">
    <citation type="journal article" date="2005" name="Science">
        <title>The transcriptional landscape of the mammalian genome.</title>
        <authorList>
            <person name="Carninci P."/>
            <person name="Kasukawa T."/>
            <person name="Katayama S."/>
            <person name="Gough J."/>
            <person name="Frith M.C."/>
            <person name="Maeda N."/>
            <person name="Oyama R."/>
            <person name="Ravasi T."/>
            <person name="Lenhard B."/>
            <person name="Wells C."/>
            <person name="Kodzius R."/>
            <person name="Shimokawa K."/>
            <person name="Bajic V.B."/>
            <person name="Brenner S.E."/>
            <person name="Batalov S."/>
            <person name="Forrest A.R."/>
            <person name="Zavolan M."/>
            <person name="Davis M.J."/>
            <person name="Wilming L.G."/>
            <person name="Aidinis V."/>
            <person name="Allen J.E."/>
            <person name="Ambesi-Impiombato A."/>
            <person name="Apweiler R."/>
            <person name="Aturaliya R.N."/>
            <person name="Bailey T.L."/>
            <person name="Bansal M."/>
            <person name="Baxter L."/>
            <person name="Beisel K.W."/>
            <person name="Bersano T."/>
            <person name="Bono H."/>
            <person name="Chalk A.M."/>
            <person name="Chiu K.P."/>
            <person name="Choudhary V."/>
            <person name="Christoffels A."/>
            <person name="Clutterbuck D.R."/>
            <person name="Crowe M.L."/>
            <person name="Dalla E."/>
            <person name="Dalrymple B.P."/>
            <person name="de Bono B."/>
            <person name="Della Gatta G."/>
            <person name="di Bernardo D."/>
            <person name="Down T."/>
            <person name="Engstrom P."/>
            <person name="Fagiolini M."/>
            <person name="Faulkner G."/>
            <person name="Fletcher C.F."/>
            <person name="Fukushima T."/>
            <person name="Furuno M."/>
            <person name="Futaki S."/>
            <person name="Gariboldi M."/>
            <person name="Georgii-Hemming P."/>
            <person name="Gingeras T.R."/>
            <person name="Gojobori T."/>
            <person name="Green R.E."/>
            <person name="Gustincich S."/>
            <person name="Harbers M."/>
            <person name="Hayashi Y."/>
            <person name="Hensch T.K."/>
            <person name="Hirokawa N."/>
            <person name="Hill D."/>
            <person name="Huminiecki L."/>
            <person name="Iacono M."/>
            <person name="Ikeo K."/>
            <person name="Iwama A."/>
            <person name="Ishikawa T."/>
            <person name="Jakt M."/>
            <person name="Kanapin A."/>
            <person name="Katoh M."/>
            <person name="Kawasawa Y."/>
            <person name="Kelso J."/>
            <person name="Kitamura H."/>
            <person name="Kitano H."/>
            <person name="Kollias G."/>
            <person name="Krishnan S.P."/>
            <person name="Kruger A."/>
            <person name="Kummerfeld S.K."/>
            <person name="Kurochkin I.V."/>
            <person name="Lareau L.F."/>
            <person name="Lazarevic D."/>
            <person name="Lipovich L."/>
            <person name="Liu J."/>
            <person name="Liuni S."/>
            <person name="McWilliam S."/>
            <person name="Madan Babu M."/>
            <person name="Madera M."/>
            <person name="Marchionni L."/>
            <person name="Matsuda H."/>
            <person name="Matsuzawa S."/>
            <person name="Miki H."/>
            <person name="Mignone F."/>
            <person name="Miyake S."/>
            <person name="Morris K."/>
            <person name="Mottagui-Tabar S."/>
            <person name="Mulder N."/>
            <person name="Nakano N."/>
            <person name="Nakauchi H."/>
            <person name="Ng P."/>
            <person name="Nilsson R."/>
            <person name="Nishiguchi S."/>
            <person name="Nishikawa S."/>
            <person name="Nori F."/>
            <person name="Ohara O."/>
            <person name="Okazaki Y."/>
            <person name="Orlando V."/>
            <person name="Pang K.C."/>
            <person name="Pavan W.J."/>
            <person name="Pavesi G."/>
            <person name="Pesole G."/>
            <person name="Petrovsky N."/>
            <person name="Piazza S."/>
            <person name="Reed J."/>
            <person name="Reid J.F."/>
            <person name="Ring B.Z."/>
            <person name="Ringwald M."/>
            <person name="Rost B."/>
            <person name="Ruan Y."/>
            <person name="Salzberg S.L."/>
            <person name="Sandelin A."/>
            <person name="Schneider C."/>
            <person name="Schoenbach C."/>
            <person name="Sekiguchi K."/>
            <person name="Semple C.A."/>
            <person name="Seno S."/>
            <person name="Sessa L."/>
            <person name="Sheng Y."/>
            <person name="Shibata Y."/>
            <person name="Shimada H."/>
            <person name="Shimada K."/>
            <person name="Silva D."/>
            <person name="Sinclair B."/>
            <person name="Sperling S."/>
            <person name="Stupka E."/>
            <person name="Sugiura K."/>
            <person name="Sultana R."/>
            <person name="Takenaka Y."/>
            <person name="Taki K."/>
            <person name="Tammoja K."/>
            <person name="Tan S.L."/>
            <person name="Tang S."/>
            <person name="Taylor M.S."/>
            <person name="Tegner J."/>
            <person name="Teichmann S.A."/>
            <person name="Ueda H.R."/>
            <person name="van Nimwegen E."/>
            <person name="Verardo R."/>
            <person name="Wei C.L."/>
            <person name="Yagi K."/>
            <person name="Yamanishi H."/>
            <person name="Zabarovsky E."/>
            <person name="Zhu S."/>
            <person name="Zimmer A."/>
            <person name="Hide W."/>
            <person name="Bult C."/>
            <person name="Grimmond S.M."/>
            <person name="Teasdale R.D."/>
            <person name="Liu E.T."/>
            <person name="Brusic V."/>
            <person name="Quackenbush J."/>
            <person name="Wahlestedt C."/>
            <person name="Mattick J.S."/>
            <person name="Hume D.A."/>
            <person name="Kai C."/>
            <person name="Sasaki D."/>
            <person name="Tomaru Y."/>
            <person name="Fukuda S."/>
            <person name="Kanamori-Katayama M."/>
            <person name="Suzuki M."/>
            <person name="Aoki J."/>
            <person name="Arakawa T."/>
            <person name="Iida J."/>
            <person name="Imamura K."/>
            <person name="Itoh M."/>
            <person name="Kato T."/>
            <person name="Kawaji H."/>
            <person name="Kawagashira N."/>
            <person name="Kawashima T."/>
            <person name="Kojima M."/>
            <person name="Kondo S."/>
            <person name="Konno H."/>
            <person name="Nakano K."/>
            <person name="Ninomiya N."/>
            <person name="Nishio T."/>
            <person name="Okada M."/>
            <person name="Plessy C."/>
            <person name="Shibata K."/>
            <person name="Shiraki T."/>
            <person name="Suzuki S."/>
            <person name="Tagami M."/>
            <person name="Waki K."/>
            <person name="Watahiki A."/>
            <person name="Okamura-Oho Y."/>
            <person name="Suzuki H."/>
            <person name="Kawai J."/>
            <person name="Hayashizaki Y."/>
        </authorList>
    </citation>
    <scope>NUCLEOTIDE SEQUENCE [LARGE SCALE MRNA]</scope>
    <source>
        <strain>C57BL/6J</strain>
        <tissue>Olfactory bulb</tissue>
    </source>
</reference>
<reference key="3">
    <citation type="journal article" date="2004" name="Genome Res.">
        <title>The status, quality, and expansion of the NIH full-length cDNA project: the Mammalian Gene Collection (MGC).</title>
        <authorList>
            <consortium name="The MGC Project Team"/>
        </authorList>
    </citation>
    <scope>NUCLEOTIDE SEQUENCE [LARGE SCALE MRNA]</scope>
    <source>
        <strain>FVB/N</strain>
        <tissue>Kidney</tissue>
    </source>
</reference>
<dbReference type="EMBL" id="AF403041">
    <property type="protein sequence ID" value="AAL57360.1"/>
    <property type="molecule type" value="mRNA"/>
</dbReference>
<dbReference type="EMBL" id="AK078289">
    <property type="protein sequence ID" value="BAC37207.1"/>
    <property type="molecule type" value="mRNA"/>
</dbReference>
<dbReference type="EMBL" id="BC018240">
    <property type="protein sequence ID" value="AAH18240.1"/>
    <property type="molecule type" value="mRNA"/>
</dbReference>
<dbReference type="CCDS" id="CCDS36582.1"/>
<dbReference type="RefSeq" id="NP_840068.1">
    <property type="nucleotide sequence ID" value="NM_178283.4"/>
</dbReference>
<dbReference type="SMR" id="Q8VBX0"/>
<dbReference type="FunCoup" id="Q8VBX0">
    <property type="interactions" value="21"/>
</dbReference>
<dbReference type="STRING" id="10090.ENSMUSP00000046476"/>
<dbReference type="PhosphoSitePlus" id="Q8VBX0"/>
<dbReference type="PaxDb" id="10090-ENSMUSP00000046476"/>
<dbReference type="ProteomicsDB" id="283180"/>
<dbReference type="Pumba" id="Q8VBX0"/>
<dbReference type="Antibodypedia" id="24111">
    <property type="antibodies" value="140 antibodies from 19 providers"/>
</dbReference>
<dbReference type="DNASU" id="142688"/>
<dbReference type="Ensembl" id="ENSMUST00000042288.8">
    <property type="protein sequence ID" value="ENSMUSP00000046476.7"/>
    <property type="gene ID" value="ENSMUSG00000033781.8"/>
</dbReference>
<dbReference type="GeneID" id="142688"/>
<dbReference type="KEGG" id="mmu:142688"/>
<dbReference type="UCSC" id="uc007piz.2">
    <property type="organism name" value="mouse"/>
</dbReference>
<dbReference type="AGR" id="MGI:2145525"/>
<dbReference type="CTD" id="79754"/>
<dbReference type="MGI" id="MGI:2145525">
    <property type="gene designation" value="Asb13"/>
</dbReference>
<dbReference type="VEuPathDB" id="HostDB:ENSMUSG00000033781"/>
<dbReference type="eggNOG" id="KOG0504">
    <property type="taxonomic scope" value="Eukaryota"/>
</dbReference>
<dbReference type="GeneTree" id="ENSGT00940000160326"/>
<dbReference type="HOGENOM" id="CLU_000134_4_2_1"/>
<dbReference type="InParanoid" id="Q8VBX0"/>
<dbReference type="OMA" id="AGFWVER"/>
<dbReference type="OrthoDB" id="10252328at2759"/>
<dbReference type="PhylomeDB" id="Q8VBX0"/>
<dbReference type="TreeFam" id="TF331945"/>
<dbReference type="Reactome" id="R-MMU-8951664">
    <property type="pathway name" value="Neddylation"/>
</dbReference>
<dbReference type="Reactome" id="R-MMU-983168">
    <property type="pathway name" value="Antigen processing: Ubiquitination &amp; Proteasome degradation"/>
</dbReference>
<dbReference type="UniPathway" id="UPA00143"/>
<dbReference type="BioGRID-ORCS" id="142688">
    <property type="hits" value="2 hits in 80 CRISPR screens"/>
</dbReference>
<dbReference type="PRO" id="PR:Q8VBX0"/>
<dbReference type="Proteomes" id="UP000000589">
    <property type="component" value="Chromosome 13"/>
</dbReference>
<dbReference type="RNAct" id="Q8VBX0">
    <property type="molecule type" value="protein"/>
</dbReference>
<dbReference type="Bgee" id="ENSMUSG00000033781">
    <property type="expression patterns" value="Expressed in cerebellar nuclear complex and 247 other cell types or tissues"/>
</dbReference>
<dbReference type="GO" id="GO:0035556">
    <property type="term" value="P:intracellular signal transduction"/>
    <property type="evidence" value="ECO:0007669"/>
    <property type="project" value="InterPro"/>
</dbReference>
<dbReference type="GO" id="GO:0016567">
    <property type="term" value="P:protein ubiquitination"/>
    <property type="evidence" value="ECO:0007669"/>
    <property type="project" value="UniProtKB-UniPathway"/>
</dbReference>
<dbReference type="CDD" id="cd03729">
    <property type="entry name" value="SOCS_ASB13"/>
    <property type="match status" value="1"/>
</dbReference>
<dbReference type="FunFam" id="1.10.750.20:FF:000001">
    <property type="entry name" value="Ankyrin repeat and SOCS box containing 1"/>
    <property type="match status" value="1"/>
</dbReference>
<dbReference type="FunFam" id="1.25.40.20:FF:000016">
    <property type="entry name" value="Ankyrin repeat and SOCS box containing 5"/>
    <property type="match status" value="1"/>
</dbReference>
<dbReference type="Gene3D" id="1.25.40.20">
    <property type="entry name" value="Ankyrin repeat-containing domain"/>
    <property type="match status" value="1"/>
</dbReference>
<dbReference type="Gene3D" id="1.10.750.20">
    <property type="entry name" value="SOCS box"/>
    <property type="match status" value="1"/>
</dbReference>
<dbReference type="InterPro" id="IPR051573">
    <property type="entry name" value="Ankyrin-SOCS_box_domain"/>
</dbReference>
<dbReference type="InterPro" id="IPR002110">
    <property type="entry name" value="Ankyrin_rpt"/>
</dbReference>
<dbReference type="InterPro" id="IPR036770">
    <property type="entry name" value="Ankyrin_rpt-contain_sf"/>
</dbReference>
<dbReference type="InterPro" id="IPR037334">
    <property type="entry name" value="ASB13_SOCS"/>
</dbReference>
<dbReference type="InterPro" id="IPR001496">
    <property type="entry name" value="SOCS_box"/>
</dbReference>
<dbReference type="InterPro" id="IPR036036">
    <property type="entry name" value="SOCS_box-like_dom_sf"/>
</dbReference>
<dbReference type="PANTHER" id="PTHR24136:SF53">
    <property type="entry name" value="ANKYRIN REPEAT AND SOCS BOX CONTAINING 13"/>
    <property type="match status" value="1"/>
</dbReference>
<dbReference type="PANTHER" id="PTHR24136">
    <property type="entry name" value="SOWAH (DROSOPHILA) HOMOLOG"/>
    <property type="match status" value="1"/>
</dbReference>
<dbReference type="Pfam" id="PF00023">
    <property type="entry name" value="Ank"/>
    <property type="match status" value="1"/>
</dbReference>
<dbReference type="Pfam" id="PF12796">
    <property type="entry name" value="Ank_2"/>
    <property type="match status" value="2"/>
</dbReference>
<dbReference type="Pfam" id="PF07525">
    <property type="entry name" value="SOCS_box"/>
    <property type="match status" value="1"/>
</dbReference>
<dbReference type="PRINTS" id="PR01415">
    <property type="entry name" value="ANKYRIN"/>
</dbReference>
<dbReference type="SMART" id="SM00248">
    <property type="entry name" value="ANK"/>
    <property type="match status" value="6"/>
</dbReference>
<dbReference type="SMART" id="SM00969">
    <property type="entry name" value="SOCS_box"/>
    <property type="match status" value="1"/>
</dbReference>
<dbReference type="SUPFAM" id="SSF48403">
    <property type="entry name" value="Ankyrin repeat"/>
    <property type="match status" value="1"/>
</dbReference>
<dbReference type="SUPFAM" id="SSF158235">
    <property type="entry name" value="SOCS box-like"/>
    <property type="match status" value="1"/>
</dbReference>
<dbReference type="PROSITE" id="PS50297">
    <property type="entry name" value="ANK_REP_REGION"/>
    <property type="match status" value="1"/>
</dbReference>
<dbReference type="PROSITE" id="PS50088">
    <property type="entry name" value="ANK_REPEAT"/>
    <property type="match status" value="6"/>
</dbReference>
<dbReference type="PROSITE" id="PS50225">
    <property type="entry name" value="SOCS"/>
    <property type="match status" value="1"/>
</dbReference>
<name>ASB13_MOUSE</name>
<protein>
    <recommendedName>
        <fullName>Ankyrin repeat and SOCS box protein 13</fullName>
        <shortName>ASB-13</shortName>
    </recommendedName>
</protein>
<feature type="chain" id="PRO_0000066950" description="Ankyrin repeat and SOCS box protein 13">
    <location>
        <begin position="1"/>
        <end position="278"/>
    </location>
</feature>
<feature type="repeat" description="ANK 1">
    <location>
        <begin position="18"/>
        <end position="47"/>
    </location>
</feature>
<feature type="repeat" description="ANK 2">
    <location>
        <begin position="51"/>
        <end position="80"/>
    </location>
</feature>
<feature type="repeat" description="ANK 3">
    <location>
        <begin position="84"/>
        <end position="113"/>
    </location>
</feature>
<feature type="repeat" description="ANK 4">
    <location>
        <begin position="116"/>
        <end position="145"/>
    </location>
</feature>
<feature type="repeat" description="ANK 5">
    <location>
        <begin position="149"/>
        <end position="178"/>
    </location>
</feature>
<feature type="repeat" description="ANK 6">
    <location>
        <begin position="181"/>
        <end position="210"/>
    </location>
</feature>
<feature type="domain" description="SOCS box" evidence="2">
    <location>
        <begin position="229"/>
        <end position="278"/>
    </location>
</feature>
<keyword id="KW-0040">ANK repeat</keyword>
<keyword id="KW-1185">Reference proteome</keyword>
<keyword id="KW-0677">Repeat</keyword>
<keyword id="KW-0833">Ubl conjugation pathway</keyword>
<organism>
    <name type="scientific">Mus musculus</name>
    <name type="common">Mouse</name>
    <dbReference type="NCBI Taxonomy" id="10090"/>
    <lineage>
        <taxon>Eukaryota</taxon>
        <taxon>Metazoa</taxon>
        <taxon>Chordata</taxon>
        <taxon>Craniata</taxon>
        <taxon>Vertebrata</taxon>
        <taxon>Euteleostomi</taxon>
        <taxon>Mammalia</taxon>
        <taxon>Eutheria</taxon>
        <taxon>Euarchontoglires</taxon>
        <taxon>Glires</taxon>
        <taxon>Rodentia</taxon>
        <taxon>Myomorpha</taxon>
        <taxon>Muroidea</taxon>
        <taxon>Muridae</taxon>
        <taxon>Murinae</taxon>
        <taxon>Mus</taxon>
        <taxon>Mus</taxon>
    </lineage>
</organism>
<proteinExistence type="evidence at transcript level"/>
<sequence>MEPRAGDGCFLGDVGFWVERTPVHEAAQRGESLQLQQLIDSGACVNQVTVDSITPLHAASLQGQAQCVQLLLAAGAQVDARNIDGSTPLCDACASGSIECVKLLLSYGAKVNPPLYTASPLHEACMSGSSECVRLLIDVGANLEAHDCHFGTPLHVACAREHLDCVKVLLNAGANVNAAKLHETALHHAAKVKNVDLIEMLIEFGGNIYARDNRGKKPSDYTWSSSAPAKCFEYYEKTPLSLSQLCRVSLRKATGVRGLEKVAKLNIPPRLIDYLSYN</sequence>
<accession>Q8VBX0</accession>
<evidence type="ECO:0000250" key="1"/>
<evidence type="ECO:0000255" key="2">
    <source>
        <dbReference type="PROSITE-ProRule" id="PRU00194"/>
    </source>
</evidence>
<evidence type="ECO:0000305" key="3"/>